<name>RPOB_STRPD</name>
<reference key="1">
    <citation type="journal article" date="2006" name="Proc. Natl. Acad. Sci. U.S.A.">
        <title>Molecular genetic anatomy of inter- and intraserotype variation in the human bacterial pathogen group A Streptococcus.</title>
        <authorList>
            <person name="Beres S.B."/>
            <person name="Richter E.W."/>
            <person name="Nagiec M.J."/>
            <person name="Sumby P."/>
            <person name="Porcella S.F."/>
            <person name="DeLeo F.R."/>
            <person name="Musser J.M."/>
        </authorList>
    </citation>
    <scope>NUCLEOTIDE SEQUENCE [LARGE SCALE GENOMIC DNA]</scope>
    <source>
        <strain>MGAS10270</strain>
    </source>
</reference>
<protein>
    <recommendedName>
        <fullName evidence="1">DNA-directed RNA polymerase subunit beta</fullName>
        <shortName evidence="1">RNAP subunit beta</shortName>
        <ecNumber evidence="1">2.7.7.6</ecNumber>
    </recommendedName>
    <alternativeName>
        <fullName evidence="1">RNA polymerase subunit beta</fullName>
    </alternativeName>
    <alternativeName>
        <fullName evidence="1">Transcriptase subunit beta</fullName>
    </alternativeName>
</protein>
<organism>
    <name type="scientific">Streptococcus pyogenes serotype M2 (strain MGAS10270)</name>
    <dbReference type="NCBI Taxonomy" id="370552"/>
    <lineage>
        <taxon>Bacteria</taxon>
        <taxon>Bacillati</taxon>
        <taxon>Bacillota</taxon>
        <taxon>Bacilli</taxon>
        <taxon>Lactobacillales</taxon>
        <taxon>Streptococcaceae</taxon>
        <taxon>Streptococcus</taxon>
    </lineage>
</organism>
<gene>
    <name evidence="1" type="primary">rpoB</name>
    <name type="ordered locus">MGAS10270_Spy0085</name>
</gene>
<feature type="chain" id="PRO_0000300411" description="DNA-directed RNA polymerase subunit beta">
    <location>
        <begin position="1"/>
        <end position="1188"/>
    </location>
</feature>
<proteinExistence type="inferred from homology"/>
<dbReference type="EC" id="2.7.7.6" evidence="1"/>
<dbReference type="EMBL" id="CP000260">
    <property type="protein sequence ID" value="ABF33150.1"/>
    <property type="molecule type" value="Genomic_DNA"/>
</dbReference>
<dbReference type="RefSeq" id="WP_002993467.1">
    <property type="nucleotide sequence ID" value="NZ_CVUH01000001.1"/>
</dbReference>
<dbReference type="SMR" id="Q1JJ23"/>
<dbReference type="GeneID" id="69900076"/>
<dbReference type="KEGG" id="sph:MGAS10270_Spy0085"/>
<dbReference type="HOGENOM" id="CLU_000524_4_1_9"/>
<dbReference type="Proteomes" id="UP000002436">
    <property type="component" value="Chromosome"/>
</dbReference>
<dbReference type="GO" id="GO:0000428">
    <property type="term" value="C:DNA-directed RNA polymerase complex"/>
    <property type="evidence" value="ECO:0007669"/>
    <property type="project" value="UniProtKB-KW"/>
</dbReference>
<dbReference type="GO" id="GO:0003677">
    <property type="term" value="F:DNA binding"/>
    <property type="evidence" value="ECO:0007669"/>
    <property type="project" value="UniProtKB-UniRule"/>
</dbReference>
<dbReference type="GO" id="GO:0003899">
    <property type="term" value="F:DNA-directed RNA polymerase activity"/>
    <property type="evidence" value="ECO:0007669"/>
    <property type="project" value="UniProtKB-UniRule"/>
</dbReference>
<dbReference type="GO" id="GO:0032549">
    <property type="term" value="F:ribonucleoside binding"/>
    <property type="evidence" value="ECO:0007669"/>
    <property type="project" value="InterPro"/>
</dbReference>
<dbReference type="GO" id="GO:0006351">
    <property type="term" value="P:DNA-templated transcription"/>
    <property type="evidence" value="ECO:0007669"/>
    <property type="project" value="UniProtKB-UniRule"/>
</dbReference>
<dbReference type="CDD" id="cd00653">
    <property type="entry name" value="RNA_pol_B_RPB2"/>
    <property type="match status" value="1"/>
</dbReference>
<dbReference type="Gene3D" id="2.40.50.100">
    <property type="match status" value="1"/>
</dbReference>
<dbReference type="Gene3D" id="2.40.50.150">
    <property type="match status" value="1"/>
</dbReference>
<dbReference type="Gene3D" id="3.90.1100.10">
    <property type="match status" value="2"/>
</dbReference>
<dbReference type="Gene3D" id="2.30.150.10">
    <property type="entry name" value="DNA-directed RNA polymerase, beta subunit, external 1 domain"/>
    <property type="match status" value="1"/>
</dbReference>
<dbReference type="Gene3D" id="2.40.270.10">
    <property type="entry name" value="DNA-directed RNA polymerase, subunit 2, domain 6"/>
    <property type="match status" value="2"/>
</dbReference>
<dbReference type="Gene3D" id="3.90.1800.10">
    <property type="entry name" value="RNA polymerase alpha subunit dimerisation domain"/>
    <property type="match status" value="1"/>
</dbReference>
<dbReference type="Gene3D" id="3.90.1110.10">
    <property type="entry name" value="RNA polymerase Rpb2, domain 2"/>
    <property type="match status" value="2"/>
</dbReference>
<dbReference type="HAMAP" id="MF_01321">
    <property type="entry name" value="RNApol_bact_RpoB"/>
    <property type="match status" value="1"/>
</dbReference>
<dbReference type="InterPro" id="IPR042107">
    <property type="entry name" value="DNA-dir_RNA_pol_bsu_ext_1_sf"/>
</dbReference>
<dbReference type="InterPro" id="IPR019462">
    <property type="entry name" value="DNA-dir_RNA_pol_bsu_external_1"/>
</dbReference>
<dbReference type="InterPro" id="IPR015712">
    <property type="entry name" value="DNA-dir_RNA_pol_su2"/>
</dbReference>
<dbReference type="InterPro" id="IPR007120">
    <property type="entry name" value="DNA-dir_RNAP_su2_dom"/>
</dbReference>
<dbReference type="InterPro" id="IPR037033">
    <property type="entry name" value="DNA-dir_RNAP_su2_hyb_sf"/>
</dbReference>
<dbReference type="InterPro" id="IPR010243">
    <property type="entry name" value="RNA_pol_bsu_bac"/>
</dbReference>
<dbReference type="InterPro" id="IPR007121">
    <property type="entry name" value="RNA_pol_bsu_CS"/>
</dbReference>
<dbReference type="InterPro" id="IPR007644">
    <property type="entry name" value="RNA_pol_bsu_protrusion"/>
</dbReference>
<dbReference type="InterPro" id="IPR007642">
    <property type="entry name" value="RNA_pol_Rpb2_2"/>
</dbReference>
<dbReference type="InterPro" id="IPR037034">
    <property type="entry name" value="RNA_pol_Rpb2_2_sf"/>
</dbReference>
<dbReference type="InterPro" id="IPR007645">
    <property type="entry name" value="RNA_pol_Rpb2_3"/>
</dbReference>
<dbReference type="InterPro" id="IPR007641">
    <property type="entry name" value="RNA_pol_Rpb2_7"/>
</dbReference>
<dbReference type="InterPro" id="IPR014724">
    <property type="entry name" value="RNA_pol_RPB2_OB-fold"/>
</dbReference>
<dbReference type="NCBIfam" id="NF001616">
    <property type="entry name" value="PRK00405.1"/>
    <property type="match status" value="1"/>
</dbReference>
<dbReference type="NCBIfam" id="TIGR02013">
    <property type="entry name" value="rpoB"/>
    <property type="match status" value="1"/>
</dbReference>
<dbReference type="PANTHER" id="PTHR20856">
    <property type="entry name" value="DNA-DIRECTED RNA POLYMERASE I SUBUNIT 2"/>
    <property type="match status" value="1"/>
</dbReference>
<dbReference type="Pfam" id="PF04563">
    <property type="entry name" value="RNA_pol_Rpb2_1"/>
    <property type="match status" value="1"/>
</dbReference>
<dbReference type="Pfam" id="PF04561">
    <property type="entry name" value="RNA_pol_Rpb2_2"/>
    <property type="match status" value="2"/>
</dbReference>
<dbReference type="Pfam" id="PF04565">
    <property type="entry name" value="RNA_pol_Rpb2_3"/>
    <property type="match status" value="1"/>
</dbReference>
<dbReference type="Pfam" id="PF10385">
    <property type="entry name" value="RNA_pol_Rpb2_45"/>
    <property type="match status" value="1"/>
</dbReference>
<dbReference type="Pfam" id="PF00562">
    <property type="entry name" value="RNA_pol_Rpb2_6"/>
    <property type="match status" value="1"/>
</dbReference>
<dbReference type="Pfam" id="PF04560">
    <property type="entry name" value="RNA_pol_Rpb2_7"/>
    <property type="match status" value="1"/>
</dbReference>
<dbReference type="SUPFAM" id="SSF64484">
    <property type="entry name" value="beta and beta-prime subunits of DNA dependent RNA-polymerase"/>
    <property type="match status" value="1"/>
</dbReference>
<dbReference type="PROSITE" id="PS01166">
    <property type="entry name" value="RNA_POL_BETA"/>
    <property type="match status" value="1"/>
</dbReference>
<keyword id="KW-0240">DNA-directed RNA polymerase</keyword>
<keyword id="KW-0548">Nucleotidyltransferase</keyword>
<keyword id="KW-0804">Transcription</keyword>
<keyword id="KW-0808">Transferase</keyword>
<comment type="function">
    <text evidence="1">DNA-dependent RNA polymerase catalyzes the transcription of DNA into RNA using the four ribonucleoside triphosphates as substrates.</text>
</comment>
<comment type="catalytic activity">
    <reaction evidence="1">
        <text>RNA(n) + a ribonucleoside 5'-triphosphate = RNA(n+1) + diphosphate</text>
        <dbReference type="Rhea" id="RHEA:21248"/>
        <dbReference type="Rhea" id="RHEA-COMP:14527"/>
        <dbReference type="Rhea" id="RHEA-COMP:17342"/>
        <dbReference type="ChEBI" id="CHEBI:33019"/>
        <dbReference type="ChEBI" id="CHEBI:61557"/>
        <dbReference type="ChEBI" id="CHEBI:140395"/>
        <dbReference type="EC" id="2.7.7.6"/>
    </reaction>
</comment>
<comment type="subunit">
    <text evidence="1">The RNAP catalytic core consists of 2 alpha, 1 beta, 1 beta' and 1 omega subunit. When a sigma factor is associated with the core the holoenzyme is formed, which can initiate transcription.</text>
</comment>
<comment type="similarity">
    <text evidence="1">Belongs to the RNA polymerase beta chain family.</text>
</comment>
<evidence type="ECO:0000255" key="1">
    <source>
        <dbReference type="HAMAP-Rule" id="MF_01321"/>
    </source>
</evidence>
<sequence>MAGHEVRYGKHRTRRSFSRIKEVLDLPNLIEIQTDSFQDFLDSGLKEVFEDVLPISNFTDTMELEFVGYEFKEPKYTLEEARIHDASYSAPIFVTFRLVNKETGEIKTQEVFFGDFPIMTEMGTFIINGGERIIVSQLVRSPGVYFNDKVDKNGKVGYGSTVIPNRGAWLELETDSKDIAYTRIDRTRKIPFTTLVRALGFSGDDEIVDIFGESDLVRNTIEKDIHKNPSDSRTDEALKEIYERLRPGEPKTADSSRSLLIARFFDARRYDLAAVGRYKVNKKLNIKTRLLNQIIAENLVDAETGEILVEAGTEMTRSVIESIEEHLDGDLNKFVYTPNDYAVVTEPVVLQKFKVVSPIDPDRVVTIVGNANPDDKVRALTPADILAEMSYFLNLAEGLGKVDDIDHLGNRRIRAVGELLANQFRIGLARMERNVRERMSVQDNDVLTPQQIINIRPVTAAVKEFFGSSQLSQFMDQHNPLSELSHKRRLSALGPGGLTRDRAGYEVRDVHYTHYGRMCPIETPEGPNIGLINNLSSFGHLNKYGFIQTPYRKVDRATGTVTNEIVWLTADEEDEYTVAQANSKLNEDGTFAEEIVMGRHQGNNQEFSASVVDFVDVSPKQVVAVATACIPFLENDDSNRALMGANMQRQAVPLIDPKAPYVGTGMEYQAAHDSGAAVIAQHNGKVVFSDAEKVEIRRQDGSLDVYHITKFRRSNSGTAYNQRTLVKVGDIVEKGDFIADGPSMENGEMALGQNPVVAYMTWEGYNFEDAVIMSERLVKEDVYTSVHLEEFESETRDTKLGPEEITREIPNVGEEALKDLDEMGIIRIGAEVKEGDILVGKVTPKGEKDLSAEERLLHAIFGDKSREVRDTSLRVPHGGDGIVRDVKIFTRANGDELQSGVNMLVRVYIAQKRKIKVGDKMAGRHGNKGVVSRIVPVEDMPYLPDGTPVDIMLNPLGVPSRMNIGQVMELHLGMAARNLGIHIATPVFDGASSEDLWDTVREAGMDSDAKTVLYDGRTGEPFDNRVSVGVMYMIKLHHMVDDKLHARSVGPYSLVTQQPLGGKAQFGGQRFGEMEVWALEAYGASNVLQEILTYKSDDVTGRLKAYEAITKGKPIPKPGVPESFRVLVKELQSLGLDMRVLDEDDNEVELRDLDEGEDDDIMHVDDLEKAREKQAQETQEVSETTDEK</sequence>
<accession>Q1JJ23</accession>